<keyword id="KW-0158">Chromosome</keyword>
<keyword id="KW-0238">DNA-binding</keyword>
<keyword id="KW-0539">Nucleus</keyword>
<sequence length="233" mass="24409">MSDSAPEIETPVEEAPKAASPAKSPAKSPGRAKKAKKDGSDKPKKPKAIPTHPPVSEMVVNALKTLNEKGGSSVIAIKKFLVATYKVEIEKLLPFIKKFLKGAVLKGEVLQVKGTGASGSFKMPPPAKKVDRPESAPKKKATKTKTRVERKEKKVVAKKPKPAVEKKAAKPAAKKAAAKPAAKKAAAKPAAKKPAAKASPKKAAAKPKAKPTPKKSTPAKPKAAARKPAKKSK</sequence>
<name>H11_GLYBA</name>
<reference key="1">
    <citation type="journal article" date="1994" name="J. Cell Biol.">
        <title>Structurally divergent histone H1 variants in chromosomes containing highly condensed interphase chromatin.</title>
        <authorList>
            <person name="Schulze E."/>
            <person name="Nagel S."/>
            <person name="Gavenis K."/>
            <person name="Grossbach U."/>
        </authorList>
    </citation>
    <scope>NUCLEOTIDE SEQUENCE [GENOMIC DNA]</scope>
</reference>
<accession>P40263</accession>
<organism>
    <name type="scientific">Glyptotendipes barbipes</name>
    <name type="common">Midge</name>
    <name type="synonym">Chironomus barbipes</name>
    <dbReference type="NCBI Taxonomy" id="33399"/>
    <lineage>
        <taxon>Eukaryota</taxon>
        <taxon>Metazoa</taxon>
        <taxon>Ecdysozoa</taxon>
        <taxon>Arthropoda</taxon>
        <taxon>Hexapoda</taxon>
        <taxon>Insecta</taxon>
        <taxon>Pterygota</taxon>
        <taxon>Neoptera</taxon>
        <taxon>Endopterygota</taxon>
        <taxon>Diptera</taxon>
        <taxon>Nematocera</taxon>
        <taxon>Chironomoidea</taxon>
        <taxon>Chironomidae</taxon>
        <taxon>Chironominae</taxon>
        <taxon>Glyptotendipes</taxon>
    </lineage>
</organism>
<dbReference type="EMBL" id="L29101">
    <property type="protein sequence ID" value="AAA62320.1"/>
    <property type="molecule type" value="Genomic_DNA"/>
</dbReference>
<dbReference type="SMR" id="P40263"/>
<dbReference type="GO" id="GO:0000786">
    <property type="term" value="C:nucleosome"/>
    <property type="evidence" value="ECO:0007669"/>
    <property type="project" value="InterPro"/>
</dbReference>
<dbReference type="GO" id="GO:0005634">
    <property type="term" value="C:nucleus"/>
    <property type="evidence" value="ECO:0007669"/>
    <property type="project" value="UniProtKB-SubCell"/>
</dbReference>
<dbReference type="GO" id="GO:0003677">
    <property type="term" value="F:DNA binding"/>
    <property type="evidence" value="ECO:0007669"/>
    <property type="project" value="UniProtKB-KW"/>
</dbReference>
<dbReference type="GO" id="GO:0030527">
    <property type="term" value="F:structural constituent of chromatin"/>
    <property type="evidence" value="ECO:0007669"/>
    <property type="project" value="InterPro"/>
</dbReference>
<dbReference type="GO" id="GO:0006334">
    <property type="term" value="P:nucleosome assembly"/>
    <property type="evidence" value="ECO:0007669"/>
    <property type="project" value="InterPro"/>
</dbReference>
<dbReference type="CDD" id="cd00073">
    <property type="entry name" value="H15"/>
    <property type="match status" value="1"/>
</dbReference>
<dbReference type="FunFam" id="1.10.10.10:FF:000140">
    <property type="entry name" value="Histone H1.0"/>
    <property type="match status" value="1"/>
</dbReference>
<dbReference type="Gene3D" id="1.10.10.10">
    <property type="entry name" value="Winged helix-like DNA-binding domain superfamily/Winged helix DNA-binding domain"/>
    <property type="match status" value="1"/>
</dbReference>
<dbReference type="InterPro" id="IPR005819">
    <property type="entry name" value="H1/H5"/>
</dbReference>
<dbReference type="InterPro" id="IPR005818">
    <property type="entry name" value="Histone_H1/H5_H15"/>
</dbReference>
<dbReference type="InterPro" id="IPR036388">
    <property type="entry name" value="WH-like_DNA-bd_sf"/>
</dbReference>
<dbReference type="InterPro" id="IPR036390">
    <property type="entry name" value="WH_DNA-bd_sf"/>
</dbReference>
<dbReference type="Pfam" id="PF00538">
    <property type="entry name" value="Linker_histone"/>
    <property type="match status" value="1"/>
</dbReference>
<dbReference type="PRINTS" id="PR00624">
    <property type="entry name" value="HISTONEH5"/>
</dbReference>
<dbReference type="SMART" id="SM00526">
    <property type="entry name" value="H15"/>
    <property type="match status" value="1"/>
</dbReference>
<dbReference type="SUPFAM" id="SSF46785">
    <property type="entry name" value="Winged helix' DNA-binding domain"/>
    <property type="match status" value="1"/>
</dbReference>
<dbReference type="PROSITE" id="PS51504">
    <property type="entry name" value="H15"/>
    <property type="match status" value="1"/>
</dbReference>
<feature type="chain" id="PRO_0000195973" description="Histone H1-I">
    <location>
        <begin position="1"/>
        <end position="233"/>
    </location>
</feature>
<feature type="domain" description="H15" evidence="1">
    <location>
        <begin position="51"/>
        <end position="125"/>
    </location>
</feature>
<feature type="region of interest" description="Disordered" evidence="2">
    <location>
        <begin position="1"/>
        <end position="55"/>
    </location>
</feature>
<feature type="region of interest" description="Disordered" evidence="2">
    <location>
        <begin position="115"/>
        <end position="233"/>
    </location>
</feature>
<feature type="compositionally biased region" description="Low complexity" evidence="2">
    <location>
        <begin position="17"/>
        <end position="29"/>
    </location>
</feature>
<feature type="compositionally biased region" description="Basic and acidic residues" evidence="2">
    <location>
        <begin position="128"/>
        <end position="137"/>
    </location>
</feature>
<feature type="compositionally biased region" description="Basic and acidic residues" evidence="2">
    <location>
        <begin position="146"/>
        <end position="155"/>
    </location>
</feature>
<feature type="compositionally biased region" description="Basic residues" evidence="2">
    <location>
        <begin position="172"/>
        <end position="213"/>
    </location>
</feature>
<feature type="compositionally biased region" description="Basic residues" evidence="2">
    <location>
        <begin position="223"/>
        <end position="233"/>
    </location>
</feature>
<protein>
    <recommendedName>
        <fullName>Histone H1-I</fullName>
    </recommendedName>
</protein>
<evidence type="ECO:0000255" key="1">
    <source>
        <dbReference type="PROSITE-ProRule" id="PRU00837"/>
    </source>
</evidence>
<evidence type="ECO:0000256" key="2">
    <source>
        <dbReference type="SAM" id="MobiDB-lite"/>
    </source>
</evidence>
<proteinExistence type="inferred from homology"/>
<comment type="function">
    <text>Histones H1 are necessary for the condensation of nucleosome chains into higher-order structures.</text>
</comment>
<comment type="subcellular location">
    <subcellularLocation>
        <location>Nucleus</location>
    </subcellularLocation>
    <subcellularLocation>
        <location>Chromosome</location>
    </subcellularLocation>
</comment>
<comment type="similarity">
    <text evidence="1">Belongs to the histone H1/H5 family.</text>
</comment>